<keyword id="KW-0028">Amino-acid biosynthesis</keyword>
<keyword id="KW-0100">Branched-chain amino acid biosynthesis</keyword>
<keyword id="KW-0432">Leucine biosynthesis</keyword>
<keyword id="KW-0456">Lyase</keyword>
<accession>A1UZ33</accession>
<evidence type="ECO:0000255" key="1">
    <source>
        <dbReference type="HAMAP-Rule" id="MF_01031"/>
    </source>
</evidence>
<proteinExistence type="inferred from homology"/>
<gene>
    <name evidence="1" type="primary">leuD</name>
    <name type="ordered locus">BMASAVP1_1642</name>
</gene>
<organism>
    <name type="scientific">Burkholderia mallei (strain SAVP1)</name>
    <dbReference type="NCBI Taxonomy" id="320388"/>
    <lineage>
        <taxon>Bacteria</taxon>
        <taxon>Pseudomonadati</taxon>
        <taxon>Pseudomonadota</taxon>
        <taxon>Betaproteobacteria</taxon>
        <taxon>Burkholderiales</taxon>
        <taxon>Burkholderiaceae</taxon>
        <taxon>Burkholderia</taxon>
        <taxon>pseudomallei group</taxon>
    </lineage>
</organism>
<dbReference type="EC" id="4.2.1.33" evidence="1"/>
<dbReference type="EMBL" id="CP000525">
    <property type="protein sequence ID" value="ABM49298.1"/>
    <property type="molecule type" value="Genomic_DNA"/>
</dbReference>
<dbReference type="RefSeq" id="WP_004187882.1">
    <property type="nucleotide sequence ID" value="NC_008784.1"/>
</dbReference>
<dbReference type="SMR" id="A1UZ33"/>
<dbReference type="GeneID" id="93063904"/>
<dbReference type="KEGG" id="bmv:BMASAVP1_1642"/>
<dbReference type="HOGENOM" id="CLU_081378_0_3_4"/>
<dbReference type="UniPathway" id="UPA00048">
    <property type="reaction ID" value="UER00071"/>
</dbReference>
<dbReference type="GO" id="GO:0009316">
    <property type="term" value="C:3-isopropylmalate dehydratase complex"/>
    <property type="evidence" value="ECO:0007669"/>
    <property type="project" value="InterPro"/>
</dbReference>
<dbReference type="GO" id="GO:0003861">
    <property type="term" value="F:3-isopropylmalate dehydratase activity"/>
    <property type="evidence" value="ECO:0007669"/>
    <property type="project" value="UniProtKB-UniRule"/>
</dbReference>
<dbReference type="GO" id="GO:0009098">
    <property type="term" value="P:L-leucine biosynthetic process"/>
    <property type="evidence" value="ECO:0007669"/>
    <property type="project" value="UniProtKB-UniRule"/>
</dbReference>
<dbReference type="CDD" id="cd01577">
    <property type="entry name" value="IPMI_Swivel"/>
    <property type="match status" value="1"/>
</dbReference>
<dbReference type="FunFam" id="3.20.19.10:FF:000003">
    <property type="entry name" value="3-isopropylmalate dehydratase small subunit"/>
    <property type="match status" value="1"/>
</dbReference>
<dbReference type="Gene3D" id="3.20.19.10">
    <property type="entry name" value="Aconitase, domain 4"/>
    <property type="match status" value="1"/>
</dbReference>
<dbReference type="HAMAP" id="MF_01031">
    <property type="entry name" value="LeuD_type1"/>
    <property type="match status" value="1"/>
</dbReference>
<dbReference type="InterPro" id="IPR004431">
    <property type="entry name" value="3-IsopropMal_deHydase_ssu"/>
</dbReference>
<dbReference type="InterPro" id="IPR015928">
    <property type="entry name" value="Aconitase/3IPM_dehydase_swvl"/>
</dbReference>
<dbReference type="InterPro" id="IPR000573">
    <property type="entry name" value="AconitaseA/IPMdHydase_ssu_swvl"/>
</dbReference>
<dbReference type="InterPro" id="IPR033940">
    <property type="entry name" value="IPMI_Swivel"/>
</dbReference>
<dbReference type="InterPro" id="IPR050075">
    <property type="entry name" value="LeuD"/>
</dbReference>
<dbReference type="NCBIfam" id="TIGR00171">
    <property type="entry name" value="leuD"/>
    <property type="match status" value="1"/>
</dbReference>
<dbReference type="NCBIfam" id="NF002458">
    <property type="entry name" value="PRK01641.1"/>
    <property type="match status" value="1"/>
</dbReference>
<dbReference type="PANTHER" id="PTHR43345:SF5">
    <property type="entry name" value="3-ISOPROPYLMALATE DEHYDRATASE SMALL SUBUNIT"/>
    <property type="match status" value="1"/>
</dbReference>
<dbReference type="PANTHER" id="PTHR43345">
    <property type="entry name" value="3-ISOPROPYLMALATE DEHYDRATASE SMALL SUBUNIT 2-RELATED-RELATED"/>
    <property type="match status" value="1"/>
</dbReference>
<dbReference type="Pfam" id="PF00694">
    <property type="entry name" value="Aconitase_C"/>
    <property type="match status" value="1"/>
</dbReference>
<dbReference type="SUPFAM" id="SSF52016">
    <property type="entry name" value="LeuD/IlvD-like"/>
    <property type="match status" value="1"/>
</dbReference>
<feature type="chain" id="PRO_1000063743" description="3-isopropylmalate dehydratase small subunit">
    <location>
        <begin position="1"/>
        <end position="216"/>
    </location>
</feature>
<protein>
    <recommendedName>
        <fullName evidence="1">3-isopropylmalate dehydratase small subunit</fullName>
        <ecNumber evidence="1">4.2.1.33</ecNumber>
    </recommendedName>
    <alternativeName>
        <fullName evidence="1">Alpha-IPM isomerase</fullName>
        <shortName evidence="1">IPMI</shortName>
    </alternativeName>
    <alternativeName>
        <fullName evidence="1">Isopropylmalate isomerase</fullName>
    </alternativeName>
</protein>
<sequence length="216" mass="24726">MEKFNVHTGVVAPLDRENVDTDAIIPKQFLKSIKRTGFGPNAFDEWRYLDHGEPGQDNSKRPLNPDFVLNQPRYQGASVLLARKNFGCGSSREHAPWALQQYGFRAIVAPSFADIFFNNCYKNGLLPIVLTEQQVDHLFNDTYAFNGYQLTIDLDAQVVRAPDGREYPFEITAFRKYCLLNGFDDIGLTLRHADKIRQFEAERLAKQPWLDNRLVG</sequence>
<name>LEUD_BURMS</name>
<comment type="function">
    <text evidence="1">Catalyzes the isomerization between 2-isopropylmalate and 3-isopropylmalate, via the formation of 2-isopropylmaleate.</text>
</comment>
<comment type="catalytic activity">
    <reaction evidence="1">
        <text>(2R,3S)-3-isopropylmalate = (2S)-2-isopropylmalate</text>
        <dbReference type="Rhea" id="RHEA:32287"/>
        <dbReference type="ChEBI" id="CHEBI:1178"/>
        <dbReference type="ChEBI" id="CHEBI:35121"/>
        <dbReference type="EC" id="4.2.1.33"/>
    </reaction>
</comment>
<comment type="pathway">
    <text evidence="1">Amino-acid biosynthesis; L-leucine biosynthesis; L-leucine from 3-methyl-2-oxobutanoate: step 2/4.</text>
</comment>
<comment type="subunit">
    <text evidence="1">Heterodimer of LeuC and LeuD.</text>
</comment>
<comment type="similarity">
    <text evidence="1">Belongs to the LeuD family. LeuD type 1 subfamily.</text>
</comment>
<reference key="1">
    <citation type="journal article" date="2010" name="Genome Biol. Evol.">
        <title>Continuing evolution of Burkholderia mallei through genome reduction and large-scale rearrangements.</title>
        <authorList>
            <person name="Losada L."/>
            <person name="Ronning C.M."/>
            <person name="DeShazer D."/>
            <person name="Woods D."/>
            <person name="Fedorova N."/>
            <person name="Kim H.S."/>
            <person name="Shabalina S.A."/>
            <person name="Pearson T.R."/>
            <person name="Brinkac L."/>
            <person name="Tan P."/>
            <person name="Nandi T."/>
            <person name="Crabtree J."/>
            <person name="Badger J."/>
            <person name="Beckstrom-Sternberg S."/>
            <person name="Saqib M."/>
            <person name="Schutzer S.E."/>
            <person name="Keim P."/>
            <person name="Nierman W.C."/>
        </authorList>
    </citation>
    <scope>NUCLEOTIDE SEQUENCE [LARGE SCALE GENOMIC DNA]</scope>
    <source>
        <strain>SAVP1</strain>
    </source>
</reference>